<organism>
    <name type="scientific">Mus musculus</name>
    <name type="common">Mouse</name>
    <dbReference type="NCBI Taxonomy" id="10090"/>
    <lineage>
        <taxon>Eukaryota</taxon>
        <taxon>Metazoa</taxon>
        <taxon>Chordata</taxon>
        <taxon>Craniata</taxon>
        <taxon>Vertebrata</taxon>
        <taxon>Euteleostomi</taxon>
        <taxon>Mammalia</taxon>
        <taxon>Eutheria</taxon>
        <taxon>Euarchontoglires</taxon>
        <taxon>Glires</taxon>
        <taxon>Rodentia</taxon>
        <taxon>Myomorpha</taxon>
        <taxon>Muroidea</taxon>
        <taxon>Muridae</taxon>
        <taxon>Murinae</taxon>
        <taxon>Mus</taxon>
        <taxon>Mus</taxon>
    </lineage>
</organism>
<name>ITFG2_MOUSE</name>
<dbReference type="EMBL" id="AK134630">
    <property type="protein sequence ID" value="BAE22217.1"/>
    <property type="molecule type" value="mRNA"/>
</dbReference>
<dbReference type="EMBL" id="AK147728">
    <property type="protein sequence ID" value="BAE28098.1"/>
    <property type="molecule type" value="mRNA"/>
</dbReference>
<dbReference type="EMBL" id="BC014833">
    <property type="protein sequence ID" value="AAH14833.1"/>
    <property type="molecule type" value="mRNA"/>
</dbReference>
<dbReference type="EMBL" id="BC025492">
    <property type="protein sequence ID" value="AAH25492.1"/>
    <property type="molecule type" value="mRNA"/>
</dbReference>
<dbReference type="CCDS" id="CCDS20572.1">
    <molecule id="Q91WI7-1"/>
</dbReference>
<dbReference type="RefSeq" id="NP_598688.1">
    <molecule id="Q91WI7-1"/>
    <property type="nucleotide sequence ID" value="NM_133927.1"/>
</dbReference>
<dbReference type="FunCoup" id="Q91WI7">
    <property type="interactions" value="2695"/>
</dbReference>
<dbReference type="STRING" id="10090.ENSMUSP00000001559"/>
<dbReference type="GlyGen" id="Q91WI7">
    <property type="glycosylation" value="1 site"/>
</dbReference>
<dbReference type="iPTMnet" id="Q91WI7"/>
<dbReference type="PhosphoSitePlus" id="Q91WI7"/>
<dbReference type="SwissPalm" id="Q91WI7"/>
<dbReference type="jPOST" id="Q91WI7"/>
<dbReference type="PaxDb" id="10090-ENSMUSP00000001559"/>
<dbReference type="ProteomicsDB" id="301695">
    <molecule id="Q91WI7-1"/>
</dbReference>
<dbReference type="ProteomicsDB" id="301696">
    <molecule id="Q91WI7-2"/>
</dbReference>
<dbReference type="Pumba" id="Q91WI7"/>
<dbReference type="Antibodypedia" id="22171">
    <property type="antibodies" value="286 antibodies from 21 providers"/>
</dbReference>
<dbReference type="DNASU" id="101142"/>
<dbReference type="Ensembl" id="ENSMUST00000001559.11">
    <molecule id="Q91WI7-1"/>
    <property type="protein sequence ID" value="ENSMUSP00000001559.9"/>
    <property type="gene ID" value="ENSMUSG00000001518.13"/>
</dbReference>
<dbReference type="GeneID" id="101142"/>
<dbReference type="KEGG" id="mmu:101142"/>
<dbReference type="UCSC" id="uc009edo.1">
    <molecule id="Q91WI7-1"/>
    <property type="organism name" value="mouse"/>
</dbReference>
<dbReference type="UCSC" id="uc012etc.1">
    <molecule id="Q91WI7-2"/>
    <property type="organism name" value="mouse"/>
</dbReference>
<dbReference type="AGR" id="MGI:1915450"/>
<dbReference type="CTD" id="55846"/>
<dbReference type="MGI" id="MGI:1915450">
    <property type="gene designation" value="Itfg2"/>
</dbReference>
<dbReference type="VEuPathDB" id="HostDB:ENSMUSG00000001518"/>
<dbReference type="eggNOG" id="ENOG502QUBC">
    <property type="taxonomic scope" value="Eukaryota"/>
</dbReference>
<dbReference type="GeneTree" id="ENSGT00390000005378"/>
<dbReference type="HOGENOM" id="CLU_021730_0_0_1"/>
<dbReference type="InParanoid" id="Q91WI7"/>
<dbReference type="OMA" id="LNKWECA"/>
<dbReference type="OrthoDB" id="9996127at2759"/>
<dbReference type="PhylomeDB" id="Q91WI7"/>
<dbReference type="TreeFam" id="TF329010"/>
<dbReference type="Reactome" id="R-MMU-9639288">
    <property type="pathway name" value="Amino acids regulate mTORC1"/>
</dbReference>
<dbReference type="BioGRID-ORCS" id="101142">
    <property type="hits" value="6 hits in 77 CRISPR screens"/>
</dbReference>
<dbReference type="ChiTaRS" id="Itfg2">
    <property type="organism name" value="mouse"/>
</dbReference>
<dbReference type="PRO" id="PR:Q91WI7"/>
<dbReference type="Proteomes" id="UP000000589">
    <property type="component" value="Chromosome 6"/>
</dbReference>
<dbReference type="RNAct" id="Q91WI7">
    <property type="molecule type" value="protein"/>
</dbReference>
<dbReference type="Bgee" id="ENSMUSG00000001518">
    <property type="expression patterns" value="Expressed in retinal neural layer and 176 other cell types or tissues"/>
</dbReference>
<dbReference type="ExpressionAtlas" id="Q91WI7">
    <property type="expression patterns" value="baseline and differential"/>
</dbReference>
<dbReference type="GO" id="GO:0005829">
    <property type="term" value="C:cytosol"/>
    <property type="evidence" value="ECO:0000314"/>
    <property type="project" value="MGI"/>
</dbReference>
<dbReference type="GO" id="GO:0005794">
    <property type="term" value="C:Golgi apparatus"/>
    <property type="evidence" value="ECO:0007669"/>
    <property type="project" value="Ensembl"/>
</dbReference>
<dbReference type="GO" id="GO:0140007">
    <property type="term" value="C:KICSTOR complex"/>
    <property type="evidence" value="ECO:0000250"/>
    <property type="project" value="UniProtKB"/>
</dbReference>
<dbReference type="GO" id="GO:0005765">
    <property type="term" value="C:lysosomal membrane"/>
    <property type="evidence" value="ECO:0000250"/>
    <property type="project" value="UniProtKB"/>
</dbReference>
<dbReference type="GO" id="GO:0005654">
    <property type="term" value="C:nucleoplasm"/>
    <property type="evidence" value="ECO:0000314"/>
    <property type="project" value="MGI"/>
</dbReference>
<dbReference type="GO" id="GO:0034198">
    <property type="term" value="P:cellular response to amino acid starvation"/>
    <property type="evidence" value="ECO:0000250"/>
    <property type="project" value="UniProtKB"/>
</dbReference>
<dbReference type="GO" id="GO:0042149">
    <property type="term" value="P:cellular response to glucose starvation"/>
    <property type="evidence" value="ECO:0000250"/>
    <property type="project" value="UniProtKB"/>
</dbReference>
<dbReference type="GO" id="GO:0002314">
    <property type="term" value="P:germinal center B cell differentiation"/>
    <property type="evidence" value="ECO:0000315"/>
    <property type="project" value="MGI"/>
</dbReference>
<dbReference type="GO" id="GO:1904262">
    <property type="term" value="P:negative regulation of TORC1 signaling"/>
    <property type="evidence" value="ECO:0000250"/>
    <property type="project" value="UniProtKB"/>
</dbReference>
<dbReference type="InterPro" id="IPR028994">
    <property type="entry name" value="Integrin_alpha_N"/>
</dbReference>
<dbReference type="InterPro" id="IPR031793">
    <property type="entry name" value="KICSTOR_ITFG2"/>
</dbReference>
<dbReference type="PANTHER" id="PTHR16317">
    <property type="entry name" value="INTEGRIN ALPHA REPEAT DOMAIN-CONTAINING"/>
    <property type="match status" value="1"/>
</dbReference>
<dbReference type="PANTHER" id="PTHR16317:SF1">
    <property type="entry name" value="KICSTOR COMPLEX PROTEIN ITFG2"/>
    <property type="match status" value="1"/>
</dbReference>
<dbReference type="Pfam" id="PF15907">
    <property type="entry name" value="Itfg2"/>
    <property type="match status" value="1"/>
</dbReference>
<dbReference type="SUPFAM" id="SSF69318">
    <property type="entry name" value="Integrin alpha N-terminal domain"/>
    <property type="match status" value="1"/>
</dbReference>
<keyword id="KW-0025">Alternative splicing</keyword>
<keyword id="KW-0458">Lysosome</keyword>
<keyword id="KW-0472">Membrane</keyword>
<keyword id="KW-0597">Phosphoprotein</keyword>
<keyword id="KW-1185">Reference proteome</keyword>
<keyword id="KW-0677">Repeat</keyword>
<comment type="function">
    <text evidence="1">As part of the KICSTOR complex functions in the amino acid-sensing branch of the TORC1 signaling pathway. Recruits, in an amino acid-independent manner, the GATOR1 complex to the lysosomal membranes and allows its interaction with GATOR2 and the RAG GTPases. Functions upstream of the RAG GTPases and is required to negatively regulate mTORC1 signaling in absence of amino acids. In absence of the KICSTOR complex mTORC1 is constitutively localized to the lysosome and activated. The KICSTOR complex is also probably involved in the regulation of mTORC1 by glucose.</text>
</comment>
<comment type="subunit">
    <text evidence="1">Part of the KICSTOR complex composed of KPTN, ITFG2, KICS2 and SZT2. SZT2 probably serves as a link between the other three proteins in the KICSTOR complex and may mediate the direct interaction with the GATOR complex via GATOR1. The KICSTOR complex interacts directly with the GATOR1 complex and most probably indirectly with the GATOR2 complex in an amino acid-independent manner.</text>
</comment>
<comment type="subcellular location">
    <subcellularLocation>
        <location evidence="1">Lysosome membrane</location>
    </subcellularLocation>
    <text evidence="1">Localization to lysosomes is amino acid-independent.</text>
</comment>
<comment type="alternative products">
    <event type="alternative splicing"/>
    <isoform>
        <id>Q91WI7-1</id>
        <name>1</name>
        <sequence type="displayed"/>
    </isoform>
    <isoform>
        <id>Q91WI7-2</id>
        <name>2</name>
        <sequence type="described" ref="VSP_026003"/>
    </isoform>
</comment>
<sequence>MRSVSYVQRVALDFSGSLFPHAICLGDVDNDALNELVVGDTSGKLSVYKNDDSRPWLTCMCQGMLTCVGVGDVCNKGKNLVVAVSAEGWLHLFDLTPTKALDASGHHETLGEEQRPVFKQHIPANTKVMLISDIDGDGCYELVVGYTDRVVRAFRWEELAEGPEHLAGQLVSLKKWMLEGQVDSLSVTPGPLGVPELVVSQPGCAYAVLLCTWNKDTGSPPASEEATGDSRETPAARDVVLHQTSGRIHNKNVSTHLIGNIRQGHNPEGGNAGLFALCTLDGTLKLMQEADKLLWSVQVDHQLFALEKLDVTGNGLEEVVACAWDGQTYIIDHNRTVVRFQVDENIRAFCAGQYACKEGRNSPCLVYVTFNQKIYVYWEVQLERMESTNLLKLLEAEPEYHRLLQELRVDPEDLPAVCTLLHQTLYHPDQPLQCTPSSFQDPT</sequence>
<gene>
    <name evidence="4" type="primary">Itfg2</name>
</gene>
<protein>
    <recommendedName>
        <fullName evidence="3">KICSTOR complex protein ITFG2</fullName>
    </recommendedName>
    <alternativeName>
        <fullName evidence="4">Integrin-alpha FG-GAP repeat-containing protein 2</fullName>
    </alternativeName>
</protein>
<reference key="1">
    <citation type="journal article" date="2005" name="Science">
        <title>The transcriptional landscape of the mammalian genome.</title>
        <authorList>
            <person name="Carninci P."/>
            <person name="Kasukawa T."/>
            <person name="Katayama S."/>
            <person name="Gough J."/>
            <person name="Frith M.C."/>
            <person name="Maeda N."/>
            <person name="Oyama R."/>
            <person name="Ravasi T."/>
            <person name="Lenhard B."/>
            <person name="Wells C."/>
            <person name="Kodzius R."/>
            <person name="Shimokawa K."/>
            <person name="Bajic V.B."/>
            <person name="Brenner S.E."/>
            <person name="Batalov S."/>
            <person name="Forrest A.R."/>
            <person name="Zavolan M."/>
            <person name="Davis M.J."/>
            <person name="Wilming L.G."/>
            <person name="Aidinis V."/>
            <person name="Allen J.E."/>
            <person name="Ambesi-Impiombato A."/>
            <person name="Apweiler R."/>
            <person name="Aturaliya R.N."/>
            <person name="Bailey T.L."/>
            <person name="Bansal M."/>
            <person name="Baxter L."/>
            <person name="Beisel K.W."/>
            <person name="Bersano T."/>
            <person name="Bono H."/>
            <person name="Chalk A.M."/>
            <person name="Chiu K.P."/>
            <person name="Choudhary V."/>
            <person name="Christoffels A."/>
            <person name="Clutterbuck D.R."/>
            <person name="Crowe M.L."/>
            <person name="Dalla E."/>
            <person name="Dalrymple B.P."/>
            <person name="de Bono B."/>
            <person name="Della Gatta G."/>
            <person name="di Bernardo D."/>
            <person name="Down T."/>
            <person name="Engstrom P."/>
            <person name="Fagiolini M."/>
            <person name="Faulkner G."/>
            <person name="Fletcher C.F."/>
            <person name="Fukushima T."/>
            <person name="Furuno M."/>
            <person name="Futaki S."/>
            <person name="Gariboldi M."/>
            <person name="Georgii-Hemming P."/>
            <person name="Gingeras T.R."/>
            <person name="Gojobori T."/>
            <person name="Green R.E."/>
            <person name="Gustincich S."/>
            <person name="Harbers M."/>
            <person name="Hayashi Y."/>
            <person name="Hensch T.K."/>
            <person name="Hirokawa N."/>
            <person name="Hill D."/>
            <person name="Huminiecki L."/>
            <person name="Iacono M."/>
            <person name="Ikeo K."/>
            <person name="Iwama A."/>
            <person name="Ishikawa T."/>
            <person name="Jakt M."/>
            <person name="Kanapin A."/>
            <person name="Katoh M."/>
            <person name="Kawasawa Y."/>
            <person name="Kelso J."/>
            <person name="Kitamura H."/>
            <person name="Kitano H."/>
            <person name="Kollias G."/>
            <person name="Krishnan S.P."/>
            <person name="Kruger A."/>
            <person name="Kummerfeld S.K."/>
            <person name="Kurochkin I.V."/>
            <person name="Lareau L.F."/>
            <person name="Lazarevic D."/>
            <person name="Lipovich L."/>
            <person name="Liu J."/>
            <person name="Liuni S."/>
            <person name="McWilliam S."/>
            <person name="Madan Babu M."/>
            <person name="Madera M."/>
            <person name="Marchionni L."/>
            <person name="Matsuda H."/>
            <person name="Matsuzawa S."/>
            <person name="Miki H."/>
            <person name="Mignone F."/>
            <person name="Miyake S."/>
            <person name="Morris K."/>
            <person name="Mottagui-Tabar S."/>
            <person name="Mulder N."/>
            <person name="Nakano N."/>
            <person name="Nakauchi H."/>
            <person name="Ng P."/>
            <person name="Nilsson R."/>
            <person name="Nishiguchi S."/>
            <person name="Nishikawa S."/>
            <person name="Nori F."/>
            <person name="Ohara O."/>
            <person name="Okazaki Y."/>
            <person name="Orlando V."/>
            <person name="Pang K.C."/>
            <person name="Pavan W.J."/>
            <person name="Pavesi G."/>
            <person name="Pesole G."/>
            <person name="Petrovsky N."/>
            <person name="Piazza S."/>
            <person name="Reed J."/>
            <person name="Reid J.F."/>
            <person name="Ring B.Z."/>
            <person name="Ringwald M."/>
            <person name="Rost B."/>
            <person name="Ruan Y."/>
            <person name="Salzberg S.L."/>
            <person name="Sandelin A."/>
            <person name="Schneider C."/>
            <person name="Schoenbach C."/>
            <person name="Sekiguchi K."/>
            <person name="Semple C.A."/>
            <person name="Seno S."/>
            <person name="Sessa L."/>
            <person name="Sheng Y."/>
            <person name="Shibata Y."/>
            <person name="Shimada H."/>
            <person name="Shimada K."/>
            <person name="Silva D."/>
            <person name="Sinclair B."/>
            <person name="Sperling S."/>
            <person name="Stupka E."/>
            <person name="Sugiura K."/>
            <person name="Sultana R."/>
            <person name="Takenaka Y."/>
            <person name="Taki K."/>
            <person name="Tammoja K."/>
            <person name="Tan S.L."/>
            <person name="Tang S."/>
            <person name="Taylor M.S."/>
            <person name="Tegner J."/>
            <person name="Teichmann S.A."/>
            <person name="Ueda H.R."/>
            <person name="van Nimwegen E."/>
            <person name="Verardo R."/>
            <person name="Wei C.L."/>
            <person name="Yagi K."/>
            <person name="Yamanishi H."/>
            <person name="Zabarovsky E."/>
            <person name="Zhu S."/>
            <person name="Zimmer A."/>
            <person name="Hide W."/>
            <person name="Bult C."/>
            <person name="Grimmond S.M."/>
            <person name="Teasdale R.D."/>
            <person name="Liu E.T."/>
            <person name="Brusic V."/>
            <person name="Quackenbush J."/>
            <person name="Wahlestedt C."/>
            <person name="Mattick J.S."/>
            <person name="Hume D.A."/>
            <person name="Kai C."/>
            <person name="Sasaki D."/>
            <person name="Tomaru Y."/>
            <person name="Fukuda S."/>
            <person name="Kanamori-Katayama M."/>
            <person name="Suzuki M."/>
            <person name="Aoki J."/>
            <person name="Arakawa T."/>
            <person name="Iida J."/>
            <person name="Imamura K."/>
            <person name="Itoh M."/>
            <person name="Kato T."/>
            <person name="Kawaji H."/>
            <person name="Kawagashira N."/>
            <person name="Kawashima T."/>
            <person name="Kojima M."/>
            <person name="Kondo S."/>
            <person name="Konno H."/>
            <person name="Nakano K."/>
            <person name="Ninomiya N."/>
            <person name="Nishio T."/>
            <person name="Okada M."/>
            <person name="Plessy C."/>
            <person name="Shibata K."/>
            <person name="Shiraki T."/>
            <person name="Suzuki S."/>
            <person name="Tagami M."/>
            <person name="Waki K."/>
            <person name="Watahiki A."/>
            <person name="Okamura-Oho Y."/>
            <person name="Suzuki H."/>
            <person name="Kawai J."/>
            <person name="Hayashizaki Y."/>
        </authorList>
    </citation>
    <scope>NUCLEOTIDE SEQUENCE [LARGE SCALE MRNA] (ISOFORM 1)</scope>
    <source>
        <strain>C57BL/6J</strain>
        <tissue>Medulla oblongata</tissue>
    </source>
</reference>
<reference key="2">
    <citation type="journal article" date="2004" name="Genome Res.">
        <title>The status, quality, and expansion of the NIH full-length cDNA project: the Mammalian Gene Collection (MGC).</title>
        <authorList>
            <consortium name="The MGC Project Team"/>
        </authorList>
    </citation>
    <scope>NUCLEOTIDE SEQUENCE [LARGE SCALE MRNA] (ISOFORMS 1 AND 2)</scope>
    <source>
        <strain>FVB/N</strain>
        <tissue>Eye</tissue>
        <tissue>Liver</tissue>
    </source>
</reference>
<evidence type="ECO:0000250" key="1">
    <source>
        <dbReference type="UniProtKB" id="Q969R8"/>
    </source>
</evidence>
<evidence type="ECO:0000303" key="2">
    <source>
    </source>
</evidence>
<evidence type="ECO:0000305" key="3"/>
<evidence type="ECO:0000312" key="4">
    <source>
        <dbReference type="MGI" id="MGI:1915450"/>
    </source>
</evidence>
<proteinExistence type="evidence at transcript level"/>
<feature type="chain" id="PRO_0000289293" description="KICSTOR complex protein ITFG2">
    <location>
        <begin position="1"/>
        <end position="443"/>
    </location>
</feature>
<feature type="repeat" description="FG-GAP 1; atypical">
    <location>
        <begin position="19"/>
        <end position="48"/>
    </location>
</feature>
<feature type="repeat" description="FG-GAP 2; atypical">
    <location>
        <begin position="125"/>
        <end position="154"/>
    </location>
</feature>
<feature type="modified residue" description="Phosphoserine" evidence="1">
    <location>
        <position position="104"/>
    </location>
</feature>
<feature type="modified residue" description="Phosphoserine" evidence="1">
    <location>
        <position position="219"/>
    </location>
</feature>
<feature type="splice variant" id="VSP_026003" description="In isoform 2." evidence="2">
    <original>VDPEDLPAVCTLLHQTLYHPDQPLQCTPSSFQDPT</original>
    <variation>ILKISLQSVPCFIRLSTIRTSHYSVPPQASRTPPSWARPL</variation>
    <location>
        <begin position="409"/>
        <end position="443"/>
    </location>
</feature>
<feature type="sequence conflict" description="In Ref. 1; BAE22217." evidence="3" ref="1">
    <original>L</original>
    <variation>Q</variation>
    <location>
        <position position="257"/>
    </location>
</feature>
<accession>Q91WI7</accession>
<accession>Q3UYJ5</accession>
<accession>Q8R148</accession>